<organism>
    <name type="scientific">Dictyostelium discoideum</name>
    <name type="common">Social amoeba</name>
    <dbReference type="NCBI Taxonomy" id="44689"/>
    <lineage>
        <taxon>Eukaryota</taxon>
        <taxon>Amoebozoa</taxon>
        <taxon>Evosea</taxon>
        <taxon>Eumycetozoa</taxon>
        <taxon>Dictyostelia</taxon>
        <taxon>Dictyosteliales</taxon>
        <taxon>Dictyosteliaceae</taxon>
        <taxon>Dictyostelium</taxon>
    </lineage>
</organism>
<accession>P83401</accession>
<accession>Q550M6</accession>
<accession>Q8MYH7</accession>
<proteinExistence type="inferred from homology"/>
<comment type="catalytic activity">
    <reaction>
        <text>an aldehyde + NAD(+) + H2O = a carboxylate + NADH + 2 H(+)</text>
        <dbReference type="Rhea" id="RHEA:16185"/>
        <dbReference type="ChEBI" id="CHEBI:15377"/>
        <dbReference type="ChEBI" id="CHEBI:15378"/>
        <dbReference type="ChEBI" id="CHEBI:17478"/>
        <dbReference type="ChEBI" id="CHEBI:29067"/>
        <dbReference type="ChEBI" id="CHEBI:57540"/>
        <dbReference type="ChEBI" id="CHEBI:57945"/>
        <dbReference type="EC" id="1.2.1.3"/>
    </reaction>
</comment>
<comment type="subunit">
    <text evidence="2">Homotetramer.</text>
</comment>
<comment type="similarity">
    <text evidence="4">Belongs to the aldehyde dehydrogenase family.</text>
</comment>
<protein>
    <recommendedName>
        <fullName>Putative aldehyde dehydrogenase family 7 member A1 homolog</fullName>
        <ecNumber>1.2.1.3</ecNumber>
    </recommendedName>
    <alternativeName>
        <fullName>Antiquitin-1</fullName>
    </alternativeName>
</protein>
<keyword id="KW-0520">NAD</keyword>
<keyword id="KW-0560">Oxidoreductase</keyword>
<keyword id="KW-1185">Reference proteome</keyword>
<reference key="1">
    <citation type="journal article" date="2002" name="Nature">
        <title>Sequence and analysis of chromosome 2 of Dictyostelium discoideum.</title>
        <authorList>
            <person name="Gloeckner G."/>
            <person name="Eichinger L."/>
            <person name="Szafranski K."/>
            <person name="Pachebat J.A."/>
            <person name="Bankier A.T."/>
            <person name="Dear P.H."/>
            <person name="Lehmann R."/>
            <person name="Baumgart C."/>
            <person name="Parra G."/>
            <person name="Abril J.F."/>
            <person name="Guigo R."/>
            <person name="Kumpf K."/>
            <person name="Tunggal B."/>
            <person name="Cox E.C."/>
            <person name="Quail M.A."/>
            <person name="Platzer M."/>
            <person name="Rosenthal A."/>
            <person name="Noegel A.A."/>
        </authorList>
    </citation>
    <scope>NUCLEOTIDE SEQUENCE [LARGE SCALE GENOMIC DNA]</scope>
    <source>
        <strain>AX4</strain>
    </source>
</reference>
<reference key="2">
    <citation type="journal article" date="2005" name="Nature">
        <title>The genome of the social amoeba Dictyostelium discoideum.</title>
        <authorList>
            <person name="Eichinger L."/>
            <person name="Pachebat J.A."/>
            <person name="Gloeckner G."/>
            <person name="Rajandream M.A."/>
            <person name="Sucgang R."/>
            <person name="Berriman M."/>
            <person name="Song J."/>
            <person name="Olsen R."/>
            <person name="Szafranski K."/>
            <person name="Xu Q."/>
            <person name="Tunggal B."/>
            <person name="Kummerfeld S."/>
            <person name="Madera M."/>
            <person name="Konfortov B.A."/>
            <person name="Rivero F."/>
            <person name="Bankier A.T."/>
            <person name="Lehmann R."/>
            <person name="Hamlin N."/>
            <person name="Davies R."/>
            <person name="Gaudet P."/>
            <person name="Fey P."/>
            <person name="Pilcher K."/>
            <person name="Chen G."/>
            <person name="Saunders D."/>
            <person name="Sodergren E.J."/>
            <person name="Davis P."/>
            <person name="Kerhornou A."/>
            <person name="Nie X."/>
            <person name="Hall N."/>
            <person name="Anjard C."/>
            <person name="Hemphill L."/>
            <person name="Bason N."/>
            <person name="Farbrother P."/>
            <person name="Desany B."/>
            <person name="Just E."/>
            <person name="Morio T."/>
            <person name="Rost R."/>
            <person name="Churcher C.M."/>
            <person name="Cooper J."/>
            <person name="Haydock S."/>
            <person name="van Driessche N."/>
            <person name="Cronin A."/>
            <person name="Goodhead I."/>
            <person name="Muzny D.M."/>
            <person name="Mourier T."/>
            <person name="Pain A."/>
            <person name="Lu M."/>
            <person name="Harper D."/>
            <person name="Lindsay R."/>
            <person name="Hauser H."/>
            <person name="James K.D."/>
            <person name="Quiles M."/>
            <person name="Madan Babu M."/>
            <person name="Saito T."/>
            <person name="Buchrieser C."/>
            <person name="Wardroper A."/>
            <person name="Felder M."/>
            <person name="Thangavelu M."/>
            <person name="Johnson D."/>
            <person name="Knights A."/>
            <person name="Loulseged H."/>
            <person name="Mungall K.L."/>
            <person name="Oliver K."/>
            <person name="Price C."/>
            <person name="Quail M.A."/>
            <person name="Urushihara H."/>
            <person name="Hernandez J."/>
            <person name="Rabbinowitsch E."/>
            <person name="Steffen D."/>
            <person name="Sanders M."/>
            <person name="Ma J."/>
            <person name="Kohara Y."/>
            <person name="Sharp S."/>
            <person name="Simmonds M.N."/>
            <person name="Spiegler S."/>
            <person name="Tivey A."/>
            <person name="Sugano S."/>
            <person name="White B."/>
            <person name="Walker D."/>
            <person name="Woodward J.R."/>
            <person name="Winckler T."/>
            <person name="Tanaka Y."/>
            <person name="Shaulsky G."/>
            <person name="Schleicher M."/>
            <person name="Weinstock G.M."/>
            <person name="Rosenthal A."/>
            <person name="Cox E.C."/>
            <person name="Chisholm R.L."/>
            <person name="Gibbs R.A."/>
            <person name="Loomis W.F."/>
            <person name="Platzer M."/>
            <person name="Kay R.R."/>
            <person name="Williams J.G."/>
            <person name="Dear P.H."/>
            <person name="Noegel A.A."/>
            <person name="Barrell B.G."/>
            <person name="Kuspa A."/>
        </authorList>
    </citation>
    <scope>NUCLEOTIDE SEQUENCE [LARGE SCALE GENOMIC DNA]</scope>
    <source>
        <strain>AX4</strain>
    </source>
</reference>
<feature type="chain" id="PRO_0000056500" description="Putative aldehyde dehydrogenase family 7 member A1 homolog">
    <location>
        <begin position="1"/>
        <end position="509"/>
    </location>
</feature>
<feature type="active site" description="Proton acceptor" evidence="3">
    <location>
        <position position="266"/>
    </location>
</feature>
<feature type="active site" description="Nucleophile" evidence="3">
    <location>
        <position position="300"/>
    </location>
</feature>
<feature type="binding site" evidence="1">
    <location>
        <begin position="244"/>
        <end position="249"/>
    </location>
    <ligand>
        <name>NAD(+)</name>
        <dbReference type="ChEBI" id="CHEBI:57540"/>
    </ligand>
</feature>
<feature type="site" description="Transition state stabilizer" evidence="1">
    <location>
        <position position="164"/>
    </location>
</feature>
<dbReference type="EC" id="1.2.1.3"/>
<dbReference type="EMBL" id="AAFI02000019">
    <property type="protein sequence ID" value="EAL68912.1"/>
    <property type="molecule type" value="Genomic_DNA"/>
</dbReference>
<dbReference type="RefSeq" id="XP_642906.1">
    <property type="nucleotide sequence ID" value="XM_637814.1"/>
</dbReference>
<dbReference type="SMR" id="P83401"/>
<dbReference type="FunCoup" id="P83401">
    <property type="interactions" value="367"/>
</dbReference>
<dbReference type="STRING" id="44689.P83401"/>
<dbReference type="PaxDb" id="44689-DDB0231504"/>
<dbReference type="EnsemblProtists" id="EAL68912">
    <property type="protein sequence ID" value="EAL68912"/>
    <property type="gene ID" value="DDB_G0276821"/>
</dbReference>
<dbReference type="GeneID" id="8620772"/>
<dbReference type="KEGG" id="ddi:DDB_G0276821"/>
<dbReference type="dictyBase" id="DDB_G0276821"/>
<dbReference type="VEuPathDB" id="AmoebaDB:DDB_G0276821"/>
<dbReference type="eggNOG" id="KOG2453">
    <property type="taxonomic scope" value="Eukaryota"/>
</dbReference>
<dbReference type="HOGENOM" id="CLU_005391_1_2_1"/>
<dbReference type="InParanoid" id="P83401"/>
<dbReference type="OMA" id="DAWKVYM"/>
<dbReference type="PhylomeDB" id="P83401"/>
<dbReference type="Reactome" id="R-DDI-6798163">
    <property type="pathway name" value="Choline catabolism"/>
</dbReference>
<dbReference type="Reactome" id="R-DDI-71064">
    <property type="pathway name" value="Lysine catabolism"/>
</dbReference>
<dbReference type="PRO" id="PR:P83401"/>
<dbReference type="Proteomes" id="UP000002195">
    <property type="component" value="Chromosome 2"/>
</dbReference>
<dbReference type="GO" id="GO:0031012">
    <property type="term" value="C:extracellular matrix"/>
    <property type="evidence" value="ECO:0007005"/>
    <property type="project" value="dictyBase"/>
</dbReference>
<dbReference type="GO" id="GO:0045335">
    <property type="term" value="C:phagocytic vesicle"/>
    <property type="evidence" value="ECO:0007005"/>
    <property type="project" value="dictyBase"/>
</dbReference>
<dbReference type="GO" id="GO:0004029">
    <property type="term" value="F:aldehyde dehydrogenase (NAD+) activity"/>
    <property type="evidence" value="ECO:0000250"/>
    <property type="project" value="UniProtKB"/>
</dbReference>
<dbReference type="GO" id="GO:0006081">
    <property type="term" value="P:aldehyde metabolic process"/>
    <property type="evidence" value="ECO:0000250"/>
    <property type="project" value="UniProtKB"/>
</dbReference>
<dbReference type="CDD" id="cd07130">
    <property type="entry name" value="ALDH_F7_AASADH"/>
    <property type="match status" value="1"/>
</dbReference>
<dbReference type="FunFam" id="3.40.309.10:FF:000018">
    <property type="entry name" value="Alpha-aminoadipic semialdehyde dehydrogenase"/>
    <property type="match status" value="1"/>
</dbReference>
<dbReference type="Gene3D" id="3.40.605.10">
    <property type="entry name" value="Aldehyde Dehydrogenase, Chain A, domain 1"/>
    <property type="match status" value="1"/>
</dbReference>
<dbReference type="Gene3D" id="3.40.309.10">
    <property type="entry name" value="Aldehyde Dehydrogenase, Chain A, domain 2"/>
    <property type="match status" value="1"/>
</dbReference>
<dbReference type="InterPro" id="IPR016161">
    <property type="entry name" value="Ald_DH/histidinol_DH"/>
</dbReference>
<dbReference type="InterPro" id="IPR016163">
    <property type="entry name" value="Ald_DH_C"/>
</dbReference>
<dbReference type="InterPro" id="IPR029510">
    <property type="entry name" value="Ald_DH_CS_GLU"/>
</dbReference>
<dbReference type="InterPro" id="IPR016162">
    <property type="entry name" value="Ald_DH_N"/>
</dbReference>
<dbReference type="InterPro" id="IPR015590">
    <property type="entry name" value="Aldehyde_DH_dom"/>
</dbReference>
<dbReference type="InterPro" id="IPR044638">
    <property type="entry name" value="ALDH7A1-like"/>
</dbReference>
<dbReference type="PANTHER" id="PTHR43521">
    <property type="entry name" value="ALPHA-AMINOADIPIC SEMIALDEHYDE DEHYDROGENASE"/>
    <property type="match status" value="1"/>
</dbReference>
<dbReference type="PANTHER" id="PTHR43521:SF1">
    <property type="entry name" value="ALPHA-AMINOADIPIC SEMIALDEHYDE DEHYDROGENASE"/>
    <property type="match status" value="1"/>
</dbReference>
<dbReference type="Pfam" id="PF00171">
    <property type="entry name" value="Aldedh"/>
    <property type="match status" value="1"/>
</dbReference>
<dbReference type="SUPFAM" id="SSF53720">
    <property type="entry name" value="ALDH-like"/>
    <property type="match status" value="1"/>
</dbReference>
<dbReference type="PROSITE" id="PS00687">
    <property type="entry name" value="ALDEHYDE_DEHYDR_GLU"/>
    <property type="match status" value="1"/>
</dbReference>
<evidence type="ECO:0000250" key="1"/>
<evidence type="ECO:0000250" key="2">
    <source>
        <dbReference type="UniProtKB" id="P83402"/>
    </source>
</evidence>
<evidence type="ECO:0000255" key="3">
    <source>
        <dbReference type="PROSITE-ProRule" id="PRU10007"/>
    </source>
</evidence>
<evidence type="ECO:0000305" key="4"/>
<gene>
    <name type="ORF">DDB_G0276821</name>
</gene>
<sequence>MTTFNEYPFLAELGIKAENNDGVFNGKWGGAGEIIKCLNPTNNKVIATVRGAAPEEYETCIQAMLAAKVKWALTPAPRRGEIVRLIGQAMREKIEPLSKLISLEMGKIYIEAKGEVQEFIDVCDYATGLSRSINGQVMPSERPNHILMETWNPLGLVGIITAFNFPCAVLGWNAAISMICGNVQLWKGASTTSLITLAVSKIIEKVLVENDVDPAVCCVLIGPGRTVGEQMIQDKRFGLISFTGSTEVGRRISSTVHGYFGKTILELGGNNAIVVAEDADIELVLRAVLFASVGTTGQRCTTCRRLFVHESLYDTILERLTKAYKTIKIGNPLEEGVLVGPLHTQSAVKEFTEGLEEIKKQGGKVVIGGNKLDISGGNFVEPTVVAIEHDAPIVKTELFVPILYIMKFKNLDDAFAWNNEVPQGLSSSLFTNNQKNIFKWLGPTGSDCGIVNVNVATNGAEIGGAFGGEKETGGGRESGSDSWKQYCRRSTNTINYGNTMPLSQGINFN</sequence>
<name>AL7A1_DICDI</name>